<sequence length="462" mass="50072">MSAEPHHLYSQLPAIDSLLRAPEMAPLLDEYGAALLTENLRLMQAEAREYIRQFHTLADWCADWPAALRHRLNQRQPALKPVFNLSGTVLHTNLGRAPLAESAIAAVTDAMRGAVTLEYSLSGAGRGHRDRAVADLLCELTGAEDACIVNNNAAAVFLMLTVMAAGKQVVVSRGELVEIGGAFRIPDVMRQAGCELVEVGTTNRTHLKDYRQAISEHTGLLMKVHTSNYSIEGFTASVAEQQLAALGHEFAIPTATDLGSGSLVDMTRYGLPAEPMPQQLIAAGVDLVTFSGDKLLGGPQAGIILGKKQWIDQLQQHPLKRVLRADKMTLAALDATLRLYQQPDRLTELLPTMRLLTRPAQDIAESAQRVLAALNGSYAADFTLAVESCWSQIGSGSLPVDRLPSWAVTFTPKDGSGSALEALTVRWRGLAKPIIGRVADGRLWLDLRCLEDEAALLRELAP</sequence>
<reference key="1">
    <citation type="journal article" date="2006" name="PLoS Genet.">
        <title>The complete genome sequence and comparative genome analysis of the high pathogenicity Yersinia enterocolitica strain 8081.</title>
        <authorList>
            <person name="Thomson N.R."/>
            <person name="Howard S."/>
            <person name="Wren B.W."/>
            <person name="Holden M.T.G."/>
            <person name="Crossman L."/>
            <person name="Challis G.L."/>
            <person name="Churcher C."/>
            <person name="Mungall K."/>
            <person name="Brooks K."/>
            <person name="Chillingworth T."/>
            <person name="Feltwell T."/>
            <person name="Abdellah Z."/>
            <person name="Hauser H."/>
            <person name="Jagels K."/>
            <person name="Maddison M."/>
            <person name="Moule S."/>
            <person name="Sanders M."/>
            <person name="Whitehead S."/>
            <person name="Quail M.A."/>
            <person name="Dougan G."/>
            <person name="Parkhill J."/>
            <person name="Prentice M.B."/>
        </authorList>
    </citation>
    <scope>NUCLEOTIDE SEQUENCE [LARGE SCALE GENOMIC DNA]</scope>
    <source>
        <strain>NCTC 13174 / 8081</strain>
    </source>
</reference>
<dbReference type="EC" id="2.9.1.1" evidence="1"/>
<dbReference type="EMBL" id="AM286415">
    <property type="protein sequence ID" value="CAL14148.1"/>
    <property type="molecule type" value="Genomic_DNA"/>
</dbReference>
<dbReference type="RefSeq" id="WP_011817433.1">
    <property type="nucleotide sequence ID" value="NC_008800.1"/>
</dbReference>
<dbReference type="RefSeq" id="YP_001008268.1">
    <property type="nucleotide sequence ID" value="NC_008800.1"/>
</dbReference>
<dbReference type="SMR" id="A1JT25"/>
<dbReference type="KEGG" id="yen:YE4131"/>
<dbReference type="PATRIC" id="fig|393305.7.peg.4398"/>
<dbReference type="eggNOG" id="COG1921">
    <property type="taxonomic scope" value="Bacteria"/>
</dbReference>
<dbReference type="HOGENOM" id="CLU_038142_1_0_6"/>
<dbReference type="OrthoDB" id="9787096at2"/>
<dbReference type="UniPathway" id="UPA00906">
    <property type="reaction ID" value="UER00896"/>
</dbReference>
<dbReference type="Proteomes" id="UP000000642">
    <property type="component" value="Chromosome"/>
</dbReference>
<dbReference type="GO" id="GO:0005737">
    <property type="term" value="C:cytoplasm"/>
    <property type="evidence" value="ECO:0007669"/>
    <property type="project" value="UniProtKB-SubCell"/>
</dbReference>
<dbReference type="GO" id="GO:0004125">
    <property type="term" value="F:L-seryl-tRNA(Sec) selenium transferase activity"/>
    <property type="evidence" value="ECO:0007669"/>
    <property type="project" value="UniProtKB-UniRule"/>
</dbReference>
<dbReference type="GO" id="GO:0001717">
    <property type="term" value="P:conversion of seryl-tRNAsec to selenocys-tRNAsec"/>
    <property type="evidence" value="ECO:0007669"/>
    <property type="project" value="UniProtKB-UniRule"/>
</dbReference>
<dbReference type="GO" id="GO:0001514">
    <property type="term" value="P:selenocysteine incorporation"/>
    <property type="evidence" value="ECO:0007669"/>
    <property type="project" value="UniProtKB-UniRule"/>
</dbReference>
<dbReference type="FunFam" id="3.40.640.10:FF:000028">
    <property type="entry name" value="L-seryl-tRNA(Sec) selenium transferase"/>
    <property type="match status" value="1"/>
</dbReference>
<dbReference type="Gene3D" id="3.90.1150.180">
    <property type="match status" value="1"/>
</dbReference>
<dbReference type="Gene3D" id="3.40.640.10">
    <property type="entry name" value="Type I PLP-dependent aspartate aminotransferase-like (Major domain)"/>
    <property type="match status" value="1"/>
</dbReference>
<dbReference type="HAMAP" id="MF_00423">
    <property type="entry name" value="SelA"/>
    <property type="match status" value="1"/>
</dbReference>
<dbReference type="InterPro" id="IPR015424">
    <property type="entry name" value="PyrdxlP-dep_Trfase"/>
</dbReference>
<dbReference type="InterPro" id="IPR015421">
    <property type="entry name" value="PyrdxlP-dep_Trfase_major"/>
</dbReference>
<dbReference type="InterPro" id="IPR018319">
    <property type="entry name" value="SelA-like"/>
</dbReference>
<dbReference type="InterPro" id="IPR004534">
    <property type="entry name" value="SelA_trans"/>
</dbReference>
<dbReference type="InterPro" id="IPR025862">
    <property type="entry name" value="SelA_trans_N_dom"/>
</dbReference>
<dbReference type="NCBIfam" id="TIGR00474">
    <property type="entry name" value="selA"/>
    <property type="match status" value="1"/>
</dbReference>
<dbReference type="PANTHER" id="PTHR32328">
    <property type="entry name" value="L-SERYL-TRNA(SEC) SELENIUM TRANSFERASE"/>
    <property type="match status" value="1"/>
</dbReference>
<dbReference type="PANTHER" id="PTHR32328:SF0">
    <property type="entry name" value="L-SERYL-TRNA(SEC) SELENIUM TRANSFERASE"/>
    <property type="match status" value="1"/>
</dbReference>
<dbReference type="Pfam" id="PF12390">
    <property type="entry name" value="Se-cys_synth_N"/>
    <property type="match status" value="1"/>
</dbReference>
<dbReference type="Pfam" id="PF03841">
    <property type="entry name" value="SelA"/>
    <property type="match status" value="1"/>
</dbReference>
<dbReference type="SUPFAM" id="SSF53383">
    <property type="entry name" value="PLP-dependent transferases"/>
    <property type="match status" value="1"/>
</dbReference>
<organism>
    <name type="scientific">Yersinia enterocolitica serotype O:8 / biotype 1B (strain NCTC 13174 / 8081)</name>
    <dbReference type="NCBI Taxonomy" id="393305"/>
    <lineage>
        <taxon>Bacteria</taxon>
        <taxon>Pseudomonadati</taxon>
        <taxon>Pseudomonadota</taxon>
        <taxon>Gammaproteobacteria</taxon>
        <taxon>Enterobacterales</taxon>
        <taxon>Yersiniaceae</taxon>
        <taxon>Yersinia</taxon>
    </lineage>
</organism>
<comment type="function">
    <text evidence="1">Converts seryl-tRNA(Sec) to selenocysteinyl-tRNA(Sec) required for selenoprotein biosynthesis.</text>
</comment>
<comment type="catalytic activity">
    <reaction evidence="1">
        <text>L-seryl-tRNA(Sec) + selenophosphate + H(+) = L-selenocysteinyl-tRNA(Sec) + phosphate</text>
        <dbReference type="Rhea" id="RHEA:22728"/>
        <dbReference type="Rhea" id="RHEA-COMP:9742"/>
        <dbReference type="Rhea" id="RHEA-COMP:9743"/>
        <dbReference type="ChEBI" id="CHEBI:15378"/>
        <dbReference type="ChEBI" id="CHEBI:16144"/>
        <dbReference type="ChEBI" id="CHEBI:43474"/>
        <dbReference type="ChEBI" id="CHEBI:78533"/>
        <dbReference type="ChEBI" id="CHEBI:78573"/>
        <dbReference type="EC" id="2.9.1.1"/>
    </reaction>
</comment>
<comment type="cofactor">
    <cofactor evidence="1">
        <name>pyridoxal 5'-phosphate</name>
        <dbReference type="ChEBI" id="CHEBI:597326"/>
    </cofactor>
</comment>
<comment type="pathway">
    <text evidence="1">Aminoacyl-tRNA biosynthesis; selenocysteinyl-tRNA(Sec) biosynthesis; selenocysteinyl-tRNA(Sec) from L-seryl-tRNA(Sec) (bacterial route): step 1/1.</text>
</comment>
<comment type="subunit">
    <text evidence="1">Homodecamer; pentamer of dimers. Binds only one seryl-tRNA(Sec) per dimer.</text>
</comment>
<comment type="subcellular location">
    <subcellularLocation>
        <location evidence="1">Cytoplasm</location>
    </subcellularLocation>
</comment>
<comment type="similarity">
    <text evidence="1">Belongs to the SelA family.</text>
</comment>
<feature type="chain" id="PRO_1000050386" description="L-seryl-tRNA(Sec) selenium transferase">
    <location>
        <begin position="1"/>
        <end position="462"/>
    </location>
</feature>
<feature type="modified residue" description="N6-(pyridoxal phosphate)lysine" evidence="1">
    <location>
        <position position="294"/>
    </location>
</feature>
<keyword id="KW-0963">Cytoplasm</keyword>
<keyword id="KW-0648">Protein biosynthesis</keyword>
<keyword id="KW-0663">Pyridoxal phosphate</keyword>
<keyword id="KW-0711">Selenium</keyword>
<keyword id="KW-0808">Transferase</keyword>
<evidence type="ECO:0000255" key="1">
    <source>
        <dbReference type="HAMAP-Rule" id="MF_00423"/>
    </source>
</evidence>
<accession>A1JT25</accession>
<proteinExistence type="inferred from homology"/>
<name>SELA_YERE8</name>
<gene>
    <name evidence="1" type="primary">selA</name>
    <name type="ordered locus">YE4131</name>
</gene>
<protein>
    <recommendedName>
        <fullName evidence="1">L-seryl-tRNA(Sec) selenium transferase</fullName>
        <ecNumber evidence="1">2.9.1.1</ecNumber>
    </recommendedName>
    <alternativeName>
        <fullName evidence="1">Selenocysteine synthase</fullName>
        <shortName evidence="1">Sec synthase</shortName>
    </alternativeName>
    <alternativeName>
        <fullName evidence="1">Selenocysteinyl-tRNA(Sec) synthase</fullName>
    </alternativeName>
</protein>